<feature type="chain" id="PRO_1000098262" description="GTP cyclohydrolase-2">
    <location>
        <begin position="1"/>
        <end position="200"/>
    </location>
</feature>
<feature type="active site" description="Proton acceptor" evidence="1">
    <location>
        <position position="127"/>
    </location>
</feature>
<feature type="active site" description="Nucleophile" evidence="1">
    <location>
        <position position="129"/>
    </location>
</feature>
<feature type="binding site" evidence="1">
    <location>
        <begin position="50"/>
        <end position="54"/>
    </location>
    <ligand>
        <name>GTP</name>
        <dbReference type="ChEBI" id="CHEBI:37565"/>
    </ligand>
</feature>
<feature type="binding site" evidence="1">
    <location>
        <position position="55"/>
    </location>
    <ligand>
        <name>Zn(2+)</name>
        <dbReference type="ChEBI" id="CHEBI:29105"/>
        <note>catalytic</note>
    </ligand>
</feature>
<feature type="binding site" evidence="1">
    <location>
        <position position="66"/>
    </location>
    <ligand>
        <name>Zn(2+)</name>
        <dbReference type="ChEBI" id="CHEBI:29105"/>
        <note>catalytic</note>
    </ligand>
</feature>
<feature type="binding site" evidence="1">
    <location>
        <position position="68"/>
    </location>
    <ligand>
        <name>Zn(2+)</name>
        <dbReference type="ChEBI" id="CHEBI:29105"/>
        <note>catalytic</note>
    </ligand>
</feature>
<feature type="binding site" evidence="1">
    <location>
        <position position="71"/>
    </location>
    <ligand>
        <name>GTP</name>
        <dbReference type="ChEBI" id="CHEBI:37565"/>
    </ligand>
</feature>
<feature type="binding site" evidence="1">
    <location>
        <begin position="93"/>
        <end position="95"/>
    </location>
    <ligand>
        <name>GTP</name>
        <dbReference type="ChEBI" id="CHEBI:37565"/>
    </ligand>
</feature>
<feature type="binding site" evidence="1">
    <location>
        <position position="115"/>
    </location>
    <ligand>
        <name>GTP</name>
        <dbReference type="ChEBI" id="CHEBI:37565"/>
    </ligand>
</feature>
<feature type="binding site" evidence="1">
    <location>
        <position position="150"/>
    </location>
    <ligand>
        <name>GTP</name>
        <dbReference type="ChEBI" id="CHEBI:37565"/>
    </ligand>
</feature>
<feature type="binding site" evidence="1">
    <location>
        <position position="155"/>
    </location>
    <ligand>
        <name>GTP</name>
        <dbReference type="ChEBI" id="CHEBI:37565"/>
    </ligand>
</feature>
<dbReference type="EC" id="3.5.4.25" evidence="1"/>
<dbReference type="EMBL" id="CU459141">
    <property type="protein sequence ID" value="CAM85355.1"/>
    <property type="molecule type" value="Genomic_DNA"/>
</dbReference>
<dbReference type="RefSeq" id="WP_001121174.1">
    <property type="nucleotide sequence ID" value="NZ_JBDGFB010000011.1"/>
</dbReference>
<dbReference type="SMR" id="B0V709"/>
<dbReference type="EnsemblBacteria" id="CAM85355">
    <property type="protein sequence ID" value="CAM85355"/>
    <property type="gene ID" value="ABAYE0379"/>
</dbReference>
<dbReference type="KEGG" id="aby:ABAYE0379"/>
<dbReference type="HOGENOM" id="CLU_020273_2_1_6"/>
<dbReference type="UniPathway" id="UPA00275">
    <property type="reaction ID" value="UER00400"/>
</dbReference>
<dbReference type="GO" id="GO:0005829">
    <property type="term" value="C:cytosol"/>
    <property type="evidence" value="ECO:0007669"/>
    <property type="project" value="TreeGrafter"/>
</dbReference>
<dbReference type="GO" id="GO:0005525">
    <property type="term" value="F:GTP binding"/>
    <property type="evidence" value="ECO:0007669"/>
    <property type="project" value="UniProtKB-KW"/>
</dbReference>
<dbReference type="GO" id="GO:0003935">
    <property type="term" value="F:GTP cyclohydrolase II activity"/>
    <property type="evidence" value="ECO:0007669"/>
    <property type="project" value="UniProtKB-UniRule"/>
</dbReference>
<dbReference type="GO" id="GO:0008270">
    <property type="term" value="F:zinc ion binding"/>
    <property type="evidence" value="ECO:0007669"/>
    <property type="project" value="UniProtKB-UniRule"/>
</dbReference>
<dbReference type="GO" id="GO:0009231">
    <property type="term" value="P:riboflavin biosynthetic process"/>
    <property type="evidence" value="ECO:0007669"/>
    <property type="project" value="UniProtKB-UniRule"/>
</dbReference>
<dbReference type="CDD" id="cd00641">
    <property type="entry name" value="GTP_cyclohydro2"/>
    <property type="match status" value="1"/>
</dbReference>
<dbReference type="FunFam" id="3.40.50.10990:FF:000002">
    <property type="entry name" value="GTP cyclohydrolase-2"/>
    <property type="match status" value="1"/>
</dbReference>
<dbReference type="Gene3D" id="3.40.50.10990">
    <property type="entry name" value="GTP cyclohydrolase II"/>
    <property type="match status" value="1"/>
</dbReference>
<dbReference type="HAMAP" id="MF_00179">
    <property type="entry name" value="RibA"/>
    <property type="match status" value="1"/>
</dbReference>
<dbReference type="InterPro" id="IPR032677">
    <property type="entry name" value="GTP_cyclohydro_II"/>
</dbReference>
<dbReference type="InterPro" id="IPR000926">
    <property type="entry name" value="RibA"/>
</dbReference>
<dbReference type="InterPro" id="IPR036144">
    <property type="entry name" value="RibA-like_sf"/>
</dbReference>
<dbReference type="NCBIfam" id="NF001591">
    <property type="entry name" value="PRK00393.1"/>
    <property type="match status" value="1"/>
</dbReference>
<dbReference type="NCBIfam" id="TIGR00505">
    <property type="entry name" value="ribA"/>
    <property type="match status" value="1"/>
</dbReference>
<dbReference type="PANTHER" id="PTHR21327:SF18">
    <property type="entry name" value="3,4-DIHYDROXY-2-BUTANONE 4-PHOSPHATE SYNTHASE"/>
    <property type="match status" value="1"/>
</dbReference>
<dbReference type="PANTHER" id="PTHR21327">
    <property type="entry name" value="GTP CYCLOHYDROLASE II-RELATED"/>
    <property type="match status" value="1"/>
</dbReference>
<dbReference type="Pfam" id="PF00925">
    <property type="entry name" value="GTP_cyclohydro2"/>
    <property type="match status" value="1"/>
</dbReference>
<dbReference type="SUPFAM" id="SSF142695">
    <property type="entry name" value="RibA-like"/>
    <property type="match status" value="1"/>
</dbReference>
<proteinExistence type="inferred from homology"/>
<organism>
    <name type="scientific">Acinetobacter baumannii (strain AYE)</name>
    <dbReference type="NCBI Taxonomy" id="509173"/>
    <lineage>
        <taxon>Bacteria</taxon>
        <taxon>Pseudomonadati</taxon>
        <taxon>Pseudomonadota</taxon>
        <taxon>Gammaproteobacteria</taxon>
        <taxon>Moraxellales</taxon>
        <taxon>Moraxellaceae</taxon>
        <taxon>Acinetobacter</taxon>
        <taxon>Acinetobacter calcoaceticus/baumannii complex</taxon>
    </lineage>
</organism>
<gene>
    <name evidence="1" type="primary">ribA</name>
    <name type="ordered locus">ABAYE0379</name>
</gene>
<evidence type="ECO:0000255" key="1">
    <source>
        <dbReference type="HAMAP-Rule" id="MF_00179"/>
    </source>
</evidence>
<comment type="function">
    <text evidence="1">Catalyzes the conversion of GTP to 2,5-diamino-6-ribosylamino-4(3H)-pyrimidinone 5'-phosphate (DARP), formate and pyrophosphate.</text>
</comment>
<comment type="catalytic activity">
    <reaction evidence="1">
        <text>GTP + 4 H2O = 2,5-diamino-6-hydroxy-4-(5-phosphoribosylamino)-pyrimidine + formate + 2 phosphate + 3 H(+)</text>
        <dbReference type="Rhea" id="RHEA:23704"/>
        <dbReference type="ChEBI" id="CHEBI:15377"/>
        <dbReference type="ChEBI" id="CHEBI:15378"/>
        <dbReference type="ChEBI" id="CHEBI:15740"/>
        <dbReference type="ChEBI" id="CHEBI:37565"/>
        <dbReference type="ChEBI" id="CHEBI:43474"/>
        <dbReference type="ChEBI" id="CHEBI:58614"/>
        <dbReference type="EC" id="3.5.4.25"/>
    </reaction>
</comment>
<comment type="cofactor">
    <cofactor evidence="1">
        <name>Zn(2+)</name>
        <dbReference type="ChEBI" id="CHEBI:29105"/>
    </cofactor>
    <text evidence="1">Binds 1 zinc ion per subunit.</text>
</comment>
<comment type="pathway">
    <text evidence="1">Cofactor biosynthesis; riboflavin biosynthesis; 5-amino-6-(D-ribitylamino)uracil from GTP: step 1/4.</text>
</comment>
<comment type="similarity">
    <text evidence="1">Belongs to the GTP cyclohydrolase II family.</text>
</comment>
<keyword id="KW-0342">GTP-binding</keyword>
<keyword id="KW-0378">Hydrolase</keyword>
<keyword id="KW-0479">Metal-binding</keyword>
<keyword id="KW-0547">Nucleotide-binding</keyword>
<keyword id="KW-0686">Riboflavin biosynthesis</keyword>
<keyword id="KW-0862">Zinc</keyword>
<name>RIBA_ACIBY</name>
<protein>
    <recommendedName>
        <fullName evidence="1">GTP cyclohydrolase-2</fullName>
        <ecNumber evidence="1">3.5.4.25</ecNumber>
    </recommendedName>
    <alternativeName>
        <fullName evidence="1">GTP cyclohydrolase II</fullName>
    </alternativeName>
</protein>
<accession>B0V709</accession>
<reference key="1">
    <citation type="journal article" date="2008" name="PLoS ONE">
        <title>Comparative analysis of Acinetobacters: three genomes for three lifestyles.</title>
        <authorList>
            <person name="Vallenet D."/>
            <person name="Nordmann P."/>
            <person name="Barbe V."/>
            <person name="Poirel L."/>
            <person name="Mangenot S."/>
            <person name="Bataille E."/>
            <person name="Dossat C."/>
            <person name="Gas S."/>
            <person name="Kreimeyer A."/>
            <person name="Lenoble P."/>
            <person name="Oztas S."/>
            <person name="Poulain J."/>
            <person name="Segurens B."/>
            <person name="Robert C."/>
            <person name="Abergel C."/>
            <person name="Claverie J.-M."/>
            <person name="Raoult D."/>
            <person name="Medigue C."/>
            <person name="Weissenbach J."/>
            <person name="Cruveiller S."/>
        </authorList>
    </citation>
    <scope>NUCLEOTIDE SEQUENCE [LARGE SCALE GENOMIC DNA]</scope>
    <source>
        <strain>AYE</strain>
    </source>
</reference>
<sequence length="200" mass="22314">MPIEFIATSKLPTAFGEFNISVFQDPVTGEEHVALSKGLENPPTGPVLVRVHSECLTGDAFASLKCDCGPQLQATQKLINEAGQGVILYLRQEGRGIGLTNKIRAYALQDQGHDTVDANLLLNLPADARRYDMCSIMLDHLKVKEVKLITNNPLKIQALKDQGINVVDRVPLTVGRNPFNEQYLKTKRERMDHLYQKDDF</sequence>